<name>RL21_HAEI8</name>
<gene>
    <name evidence="1" type="primary">rplU</name>
    <name type="ordered locus">NTHI1043</name>
</gene>
<keyword id="KW-0687">Ribonucleoprotein</keyword>
<keyword id="KW-0689">Ribosomal protein</keyword>
<keyword id="KW-0694">RNA-binding</keyword>
<keyword id="KW-0699">rRNA-binding</keyword>
<feature type="chain" id="PRO_0000269324" description="Large ribosomal subunit protein bL21">
    <location>
        <begin position="1"/>
        <end position="103"/>
    </location>
</feature>
<accession>Q4QM28</accession>
<reference key="1">
    <citation type="journal article" date="2005" name="J. Bacteriol.">
        <title>Genomic sequence of an otitis media isolate of nontypeable Haemophilus influenzae: comparative study with H. influenzae serotype d, strain KW20.</title>
        <authorList>
            <person name="Harrison A."/>
            <person name="Dyer D.W."/>
            <person name="Gillaspy A."/>
            <person name="Ray W.C."/>
            <person name="Mungur R."/>
            <person name="Carson M.B."/>
            <person name="Zhong H."/>
            <person name="Gipson J."/>
            <person name="Gipson M."/>
            <person name="Johnson L.S."/>
            <person name="Lewis L."/>
            <person name="Bakaletz L.O."/>
            <person name="Munson R.S. Jr."/>
        </authorList>
    </citation>
    <scope>NUCLEOTIDE SEQUENCE [LARGE SCALE GENOMIC DNA]</scope>
    <source>
        <strain>86-028NP</strain>
    </source>
</reference>
<protein>
    <recommendedName>
        <fullName evidence="1">Large ribosomal subunit protein bL21</fullName>
    </recommendedName>
    <alternativeName>
        <fullName evidence="2">50S ribosomal protein L21</fullName>
    </alternativeName>
</protein>
<comment type="function">
    <text evidence="1">This protein binds to 23S rRNA in the presence of protein L20.</text>
</comment>
<comment type="subunit">
    <text evidence="1">Part of the 50S ribosomal subunit. Contacts protein L20.</text>
</comment>
<comment type="similarity">
    <text evidence="1">Belongs to the bacterial ribosomal protein bL21 family.</text>
</comment>
<proteinExistence type="inferred from homology"/>
<dbReference type="EMBL" id="CP000057">
    <property type="protein sequence ID" value="AAX87919.1"/>
    <property type="molecule type" value="Genomic_DNA"/>
</dbReference>
<dbReference type="RefSeq" id="WP_005648192.1">
    <property type="nucleotide sequence ID" value="NC_007146.2"/>
</dbReference>
<dbReference type="SMR" id="Q4QM28"/>
<dbReference type="KEGG" id="hit:NTHI1043"/>
<dbReference type="HOGENOM" id="CLU_061463_3_2_6"/>
<dbReference type="Proteomes" id="UP000002525">
    <property type="component" value="Chromosome"/>
</dbReference>
<dbReference type="GO" id="GO:0005737">
    <property type="term" value="C:cytoplasm"/>
    <property type="evidence" value="ECO:0007669"/>
    <property type="project" value="UniProtKB-ARBA"/>
</dbReference>
<dbReference type="GO" id="GO:1990904">
    <property type="term" value="C:ribonucleoprotein complex"/>
    <property type="evidence" value="ECO:0007669"/>
    <property type="project" value="UniProtKB-KW"/>
</dbReference>
<dbReference type="GO" id="GO:0005840">
    <property type="term" value="C:ribosome"/>
    <property type="evidence" value="ECO:0007669"/>
    <property type="project" value="UniProtKB-KW"/>
</dbReference>
<dbReference type="GO" id="GO:0019843">
    <property type="term" value="F:rRNA binding"/>
    <property type="evidence" value="ECO:0007669"/>
    <property type="project" value="UniProtKB-UniRule"/>
</dbReference>
<dbReference type="GO" id="GO:0003735">
    <property type="term" value="F:structural constituent of ribosome"/>
    <property type="evidence" value="ECO:0007669"/>
    <property type="project" value="InterPro"/>
</dbReference>
<dbReference type="GO" id="GO:0006412">
    <property type="term" value="P:translation"/>
    <property type="evidence" value="ECO:0007669"/>
    <property type="project" value="UniProtKB-UniRule"/>
</dbReference>
<dbReference type="HAMAP" id="MF_01363">
    <property type="entry name" value="Ribosomal_bL21"/>
    <property type="match status" value="1"/>
</dbReference>
<dbReference type="InterPro" id="IPR028909">
    <property type="entry name" value="bL21-like"/>
</dbReference>
<dbReference type="InterPro" id="IPR036164">
    <property type="entry name" value="bL21-like_sf"/>
</dbReference>
<dbReference type="InterPro" id="IPR001787">
    <property type="entry name" value="Ribosomal_bL21"/>
</dbReference>
<dbReference type="InterPro" id="IPR018258">
    <property type="entry name" value="Ribosomal_bL21_CS"/>
</dbReference>
<dbReference type="NCBIfam" id="TIGR00061">
    <property type="entry name" value="L21"/>
    <property type="match status" value="1"/>
</dbReference>
<dbReference type="PANTHER" id="PTHR21349">
    <property type="entry name" value="50S RIBOSOMAL PROTEIN L21"/>
    <property type="match status" value="1"/>
</dbReference>
<dbReference type="PANTHER" id="PTHR21349:SF0">
    <property type="entry name" value="LARGE RIBOSOMAL SUBUNIT PROTEIN BL21M"/>
    <property type="match status" value="1"/>
</dbReference>
<dbReference type="Pfam" id="PF00829">
    <property type="entry name" value="Ribosomal_L21p"/>
    <property type="match status" value="1"/>
</dbReference>
<dbReference type="SUPFAM" id="SSF141091">
    <property type="entry name" value="L21p-like"/>
    <property type="match status" value="1"/>
</dbReference>
<dbReference type="PROSITE" id="PS01169">
    <property type="entry name" value="RIBOSOMAL_L21"/>
    <property type="match status" value="1"/>
</dbReference>
<sequence length="103" mass="11384">MYAVFQSGGKQHRVSEGQVVRLEKLELATGATVEFDSVLMVVNGEDVKIGAPVVAGAKVVAEVIAQGRGEKVKIVKFRRRKHSRKQQGHRQWFTEVKITGIQA</sequence>
<organism>
    <name type="scientific">Haemophilus influenzae (strain 86-028NP)</name>
    <dbReference type="NCBI Taxonomy" id="281310"/>
    <lineage>
        <taxon>Bacteria</taxon>
        <taxon>Pseudomonadati</taxon>
        <taxon>Pseudomonadota</taxon>
        <taxon>Gammaproteobacteria</taxon>
        <taxon>Pasteurellales</taxon>
        <taxon>Pasteurellaceae</taxon>
        <taxon>Haemophilus</taxon>
    </lineage>
</organism>
<evidence type="ECO:0000255" key="1">
    <source>
        <dbReference type="HAMAP-Rule" id="MF_01363"/>
    </source>
</evidence>
<evidence type="ECO:0000305" key="2"/>